<keyword id="KW-0066">ATP synthesis</keyword>
<keyword id="KW-0138">CF(0)</keyword>
<keyword id="KW-0150">Chloroplast</keyword>
<keyword id="KW-0375">Hydrogen ion transport</keyword>
<keyword id="KW-0406">Ion transport</keyword>
<keyword id="KW-0472">Membrane</keyword>
<keyword id="KW-0934">Plastid</keyword>
<keyword id="KW-0793">Thylakoid</keyword>
<keyword id="KW-0812">Transmembrane</keyword>
<keyword id="KW-1133">Transmembrane helix</keyword>
<keyword id="KW-0813">Transport</keyword>
<accession>A6MMJ5</accession>
<geneLocation type="chloroplast"/>
<name>ATPI_DIOEL</name>
<proteinExistence type="inferred from homology"/>
<feature type="chain" id="PRO_0000362552" description="ATP synthase subunit a, chloroplastic">
    <location>
        <begin position="1"/>
        <end position="247"/>
    </location>
</feature>
<feature type="transmembrane region" description="Helical" evidence="1">
    <location>
        <begin position="38"/>
        <end position="58"/>
    </location>
</feature>
<feature type="transmembrane region" description="Helical" evidence="1">
    <location>
        <begin position="95"/>
        <end position="115"/>
    </location>
</feature>
<feature type="transmembrane region" description="Helical" evidence="1">
    <location>
        <begin position="134"/>
        <end position="154"/>
    </location>
</feature>
<feature type="transmembrane region" description="Helical" evidence="1">
    <location>
        <begin position="199"/>
        <end position="219"/>
    </location>
</feature>
<feature type="transmembrane region" description="Helical" evidence="1">
    <location>
        <begin position="220"/>
        <end position="240"/>
    </location>
</feature>
<gene>
    <name evidence="1" type="primary">atpI</name>
</gene>
<sequence>MNVIPCSIKTLKGLYDISGVEVGQHLYWQIGALQIHAQVLITSWVVIAILLGSVIIAVRNPQTIPSGGQNFFEYVLEFIRDLSKAQIGEEYGPWVPFIGTMFLFIFVSNWSGALLPWKIIQLPHGELAAPTNDINTTVALALPTSVAYFYAGLTKKGLGYFRKYIQPTPILLPINILEDFTKPLSLSFRLFGNILADELVVVVLVSLVPSLVPIPVMFLGLFTSGIQALIFATLAAAYIGESMEGHH</sequence>
<protein>
    <recommendedName>
        <fullName evidence="1">ATP synthase subunit a, chloroplastic</fullName>
    </recommendedName>
    <alternativeName>
        <fullName evidence="1">ATP synthase F0 sector subunit a</fullName>
    </alternativeName>
    <alternativeName>
        <fullName evidence="1">F-ATPase subunit IV</fullName>
    </alternativeName>
</protein>
<organism>
    <name type="scientific">Dioscorea elephantipes</name>
    <name type="common">Elephant's foot yam</name>
    <name type="synonym">Testudinaria elephantipes</name>
    <dbReference type="NCBI Taxonomy" id="145284"/>
    <lineage>
        <taxon>Eukaryota</taxon>
        <taxon>Viridiplantae</taxon>
        <taxon>Streptophyta</taxon>
        <taxon>Embryophyta</taxon>
        <taxon>Tracheophyta</taxon>
        <taxon>Spermatophyta</taxon>
        <taxon>Magnoliopsida</taxon>
        <taxon>Liliopsida</taxon>
        <taxon>Dioscoreales</taxon>
        <taxon>Dioscoreaceae</taxon>
        <taxon>Dioscorea</taxon>
    </lineage>
</organism>
<reference key="1">
    <citation type="journal article" date="2007" name="Mol. Phylogenet. Evol.">
        <title>Phylogenetic and evolutionary implications of complete chloroplast genome sequences of four early-diverging angiosperms: Buxus (Buxaceae), Chloranthus (Chloranthaceae), Dioscorea (Dioscoreaceae), and Illicium (Schisandraceae).</title>
        <authorList>
            <person name="Hansen D.R."/>
            <person name="Dastidar S.G."/>
            <person name="Cai Z."/>
            <person name="Penaflor C."/>
            <person name="Kuehl J.V."/>
            <person name="Boore J.L."/>
            <person name="Jansen R.K."/>
        </authorList>
    </citation>
    <scope>NUCLEOTIDE SEQUENCE [LARGE SCALE GENOMIC DNA]</scope>
</reference>
<dbReference type="EMBL" id="EF380353">
    <property type="protein sequence ID" value="ABR01418.1"/>
    <property type="molecule type" value="Genomic_DNA"/>
</dbReference>
<dbReference type="RefSeq" id="YP_001294340.1">
    <property type="nucleotide sequence ID" value="NC_009601.1"/>
</dbReference>
<dbReference type="SMR" id="A6MMJ5"/>
<dbReference type="GeneID" id="5236680"/>
<dbReference type="GO" id="GO:0009535">
    <property type="term" value="C:chloroplast thylakoid membrane"/>
    <property type="evidence" value="ECO:0007669"/>
    <property type="project" value="UniProtKB-SubCell"/>
</dbReference>
<dbReference type="GO" id="GO:0005886">
    <property type="term" value="C:plasma membrane"/>
    <property type="evidence" value="ECO:0007669"/>
    <property type="project" value="UniProtKB-UniRule"/>
</dbReference>
<dbReference type="GO" id="GO:0045259">
    <property type="term" value="C:proton-transporting ATP synthase complex"/>
    <property type="evidence" value="ECO:0007669"/>
    <property type="project" value="UniProtKB-KW"/>
</dbReference>
<dbReference type="GO" id="GO:0046933">
    <property type="term" value="F:proton-transporting ATP synthase activity, rotational mechanism"/>
    <property type="evidence" value="ECO:0007669"/>
    <property type="project" value="UniProtKB-UniRule"/>
</dbReference>
<dbReference type="CDD" id="cd00310">
    <property type="entry name" value="ATP-synt_Fo_a_6"/>
    <property type="match status" value="1"/>
</dbReference>
<dbReference type="FunFam" id="1.20.120.220:FF:000001">
    <property type="entry name" value="ATP synthase subunit a, chloroplastic"/>
    <property type="match status" value="1"/>
</dbReference>
<dbReference type="Gene3D" id="1.20.120.220">
    <property type="entry name" value="ATP synthase, F0 complex, subunit A"/>
    <property type="match status" value="1"/>
</dbReference>
<dbReference type="HAMAP" id="MF_01393">
    <property type="entry name" value="ATP_synth_a_bact"/>
    <property type="match status" value="1"/>
</dbReference>
<dbReference type="InterPro" id="IPR045082">
    <property type="entry name" value="ATP_syn_F0_a_bact/chloroplast"/>
</dbReference>
<dbReference type="InterPro" id="IPR000568">
    <property type="entry name" value="ATP_synth_F0_asu"/>
</dbReference>
<dbReference type="InterPro" id="IPR023011">
    <property type="entry name" value="ATP_synth_F0_asu_AS"/>
</dbReference>
<dbReference type="InterPro" id="IPR035908">
    <property type="entry name" value="F0_ATP_A_sf"/>
</dbReference>
<dbReference type="NCBIfam" id="TIGR01131">
    <property type="entry name" value="ATP_synt_6_or_A"/>
    <property type="match status" value="1"/>
</dbReference>
<dbReference type="PANTHER" id="PTHR42823">
    <property type="entry name" value="ATP SYNTHASE SUBUNIT A, CHLOROPLASTIC"/>
    <property type="match status" value="1"/>
</dbReference>
<dbReference type="PANTHER" id="PTHR42823:SF3">
    <property type="entry name" value="ATP SYNTHASE SUBUNIT A, CHLOROPLASTIC"/>
    <property type="match status" value="1"/>
</dbReference>
<dbReference type="Pfam" id="PF00119">
    <property type="entry name" value="ATP-synt_A"/>
    <property type="match status" value="1"/>
</dbReference>
<dbReference type="PRINTS" id="PR00123">
    <property type="entry name" value="ATPASEA"/>
</dbReference>
<dbReference type="SUPFAM" id="SSF81336">
    <property type="entry name" value="F1F0 ATP synthase subunit A"/>
    <property type="match status" value="1"/>
</dbReference>
<dbReference type="PROSITE" id="PS00449">
    <property type="entry name" value="ATPASE_A"/>
    <property type="match status" value="1"/>
</dbReference>
<comment type="function">
    <text evidence="1">Key component of the proton channel; it plays a direct role in the translocation of protons across the membrane.</text>
</comment>
<comment type="subunit">
    <text evidence="1">F-type ATPases have 2 components, CF(1) - the catalytic core - and CF(0) - the membrane proton channel. CF(1) has five subunits: alpha(3), beta(3), gamma(1), delta(1), epsilon(1). CF(0) has four main subunits: a, b, b' and c.</text>
</comment>
<comment type="subcellular location">
    <subcellularLocation>
        <location evidence="1">Plastid</location>
        <location evidence="1">Chloroplast thylakoid membrane</location>
        <topology evidence="1">Multi-pass membrane protein</topology>
    </subcellularLocation>
</comment>
<comment type="similarity">
    <text evidence="1">Belongs to the ATPase A chain family.</text>
</comment>
<evidence type="ECO:0000255" key="1">
    <source>
        <dbReference type="HAMAP-Rule" id="MF_01393"/>
    </source>
</evidence>